<comment type="function">
    <text evidence="1">Catalyzes the first step in the biosynthesis of ornithine lipids, which are phosphorus-free membrane lipids. Catalyzes the 3-hydroxyacyl-acyl carrier protein-dependent acylation of ornithine to form lyso-ornithine lipid (LOL).</text>
</comment>
<comment type="catalytic activity">
    <reaction evidence="1">
        <text>a (3R)-hydroxyacyl-[ACP] + L-ornithine = a lyso-ornithine lipid + holo-[ACP] + H(+)</text>
        <dbReference type="Rhea" id="RHEA:20633"/>
        <dbReference type="Rhea" id="RHEA-COMP:9685"/>
        <dbReference type="Rhea" id="RHEA-COMP:9945"/>
        <dbReference type="ChEBI" id="CHEBI:15378"/>
        <dbReference type="ChEBI" id="CHEBI:46911"/>
        <dbReference type="ChEBI" id="CHEBI:64479"/>
        <dbReference type="ChEBI" id="CHEBI:78827"/>
        <dbReference type="ChEBI" id="CHEBI:138482"/>
        <dbReference type="EC" id="2.3.2.30"/>
    </reaction>
    <physiologicalReaction direction="left-to-right" evidence="1">
        <dbReference type="Rhea" id="RHEA:20634"/>
    </physiologicalReaction>
</comment>
<comment type="pathway">
    <text evidence="1">Lipid metabolism.</text>
</comment>
<comment type="disruption phenotype">
    <text evidence="1">Disruption mutant is unable to synthesize ornithine lipids. It can still induce nitrogen-fixing nodules on plants, but it shows delayed nodulation if compared to the wild type.</text>
</comment>
<comment type="similarity">
    <text evidence="3">Belongs to the acetyltransferase family. OlsB subfamily.</text>
</comment>
<name>OLSB_RHIME</name>
<protein>
    <recommendedName>
        <fullName evidence="3">L-ornithine N(alpha)-acyltransferase</fullName>
        <ecNumber evidence="1">2.3.2.30</ecNumber>
    </recommendedName>
    <alternativeName>
        <fullName evidence="3">Ornithine lipid synthesis protein B</fullName>
    </alternativeName>
</protein>
<reference key="1">
    <citation type="journal article" date="2001" name="Proc. Natl. Acad. Sci. U.S.A.">
        <title>Analysis of the chromosome sequence of the legume symbiont Sinorhizobium meliloti strain 1021.</title>
        <authorList>
            <person name="Capela D."/>
            <person name="Barloy-Hubler F."/>
            <person name="Gouzy J."/>
            <person name="Bothe G."/>
            <person name="Ampe F."/>
            <person name="Batut J."/>
            <person name="Boistard P."/>
            <person name="Becker A."/>
            <person name="Boutry M."/>
            <person name="Cadieu E."/>
            <person name="Dreano S."/>
            <person name="Gloux S."/>
            <person name="Godrie T."/>
            <person name="Goffeau A."/>
            <person name="Kahn D."/>
            <person name="Kiss E."/>
            <person name="Lelaure V."/>
            <person name="Masuy D."/>
            <person name="Pohl T."/>
            <person name="Portetelle D."/>
            <person name="Puehler A."/>
            <person name="Purnelle B."/>
            <person name="Ramsperger U."/>
            <person name="Renard C."/>
            <person name="Thebault P."/>
            <person name="Vandenbol M."/>
            <person name="Weidner S."/>
            <person name="Galibert F."/>
        </authorList>
    </citation>
    <scope>NUCLEOTIDE SEQUENCE [LARGE SCALE GENOMIC DNA]</scope>
    <source>
        <strain>1021</strain>
    </source>
</reference>
<reference key="2">
    <citation type="journal article" date="2001" name="Science">
        <title>The composite genome of the legume symbiont Sinorhizobium meliloti.</title>
        <authorList>
            <person name="Galibert F."/>
            <person name="Finan T.M."/>
            <person name="Long S.R."/>
            <person name="Puehler A."/>
            <person name="Abola P."/>
            <person name="Ampe F."/>
            <person name="Barloy-Hubler F."/>
            <person name="Barnett M.J."/>
            <person name="Becker A."/>
            <person name="Boistard P."/>
            <person name="Bothe G."/>
            <person name="Boutry M."/>
            <person name="Bowser L."/>
            <person name="Buhrmester J."/>
            <person name="Cadieu E."/>
            <person name="Capela D."/>
            <person name="Chain P."/>
            <person name="Cowie A."/>
            <person name="Davis R.W."/>
            <person name="Dreano S."/>
            <person name="Federspiel N.A."/>
            <person name="Fisher R.F."/>
            <person name="Gloux S."/>
            <person name="Godrie T."/>
            <person name="Goffeau A."/>
            <person name="Golding B."/>
            <person name="Gouzy J."/>
            <person name="Gurjal M."/>
            <person name="Hernandez-Lucas I."/>
            <person name="Hong A."/>
            <person name="Huizar L."/>
            <person name="Hyman R.W."/>
            <person name="Jones T."/>
            <person name="Kahn D."/>
            <person name="Kahn M.L."/>
            <person name="Kalman S."/>
            <person name="Keating D.H."/>
            <person name="Kiss E."/>
            <person name="Komp C."/>
            <person name="Lelaure V."/>
            <person name="Masuy D."/>
            <person name="Palm C."/>
            <person name="Peck M.C."/>
            <person name="Pohl T.M."/>
            <person name="Portetelle D."/>
            <person name="Purnelle B."/>
            <person name="Ramsperger U."/>
            <person name="Surzycki R."/>
            <person name="Thebault P."/>
            <person name="Vandenbol M."/>
            <person name="Vorhoelter F.J."/>
            <person name="Weidner S."/>
            <person name="Wells D.H."/>
            <person name="Wong K."/>
            <person name="Yeh K.-C."/>
            <person name="Batut J."/>
        </authorList>
    </citation>
    <scope>NUCLEOTIDE SEQUENCE [LARGE SCALE GENOMIC DNA]</scope>
    <source>
        <strain>1021</strain>
    </source>
</reference>
<reference key="3">
    <citation type="journal article" date="2004" name="Mol. Microbiol.">
        <title>Identification of a gene required for the formation of lyso-ornithine lipid, an intermediate in the biosynthesis of ornithine-containing lipids.</title>
        <authorList>
            <person name="Gao J.L."/>
            <person name="Weissenmayer B."/>
            <person name="Taylor A.M."/>
            <person name="Thomas-Oates J."/>
            <person name="Lopez-Lara I.M."/>
            <person name="Geiger O."/>
        </authorList>
    </citation>
    <scope>FUNCTION</scope>
    <scope>CATALYTIC ACTIVITY</scope>
    <scope>PATHWAY</scope>
    <scope>DISRUPTION PHENOTYPE</scope>
</reference>
<feature type="chain" id="PRO_0000452113" description="L-ornithine N(alpha)-acyltransferase">
    <location>
        <begin position="1"/>
        <end position="296"/>
    </location>
</feature>
<gene>
    <name evidence="2" type="primary">olsB</name>
    <name evidence="3" type="ordered locus">R00393</name>
    <name evidence="4" type="ORF">SMc01127</name>
</gene>
<evidence type="ECO:0000269" key="1">
    <source>
    </source>
</evidence>
<evidence type="ECO:0000303" key="2">
    <source>
    </source>
</evidence>
<evidence type="ECO:0000305" key="3"/>
<evidence type="ECO:0000312" key="4">
    <source>
        <dbReference type="EMBL" id="CAC41830.1"/>
    </source>
</evidence>
<sequence>MTIELLDSMGVVDTSNAYIRKAVAAPASDVLGRIANLETRLARSAAEIDAAQAVRYRVFVEEMKAQVAPEAGRRKRDIDSWDAICDHLLVLDTSIEGDAEEQIVGTYRLLRQDVAERTGGFYSASEFAIGELLSRHPGKRFMELGRSCVLPEYRTKRTVELLWQGNWAYALKHGIDAMFGCGSFPGVVPEEHALALSFLHHNVRVRDEWAVSARPELYRTMDLMPPEAINPKKALAALPPLIKGYMRLGAMVGDGAVVDQAFRTTDVLIVLPIGKISGRYLNYYGADAGRFSSPVS</sequence>
<dbReference type="EC" id="2.3.2.30" evidence="1"/>
<dbReference type="EMBL" id="AL591688">
    <property type="protein sequence ID" value="CAC41830.1"/>
    <property type="molecule type" value="Genomic_DNA"/>
</dbReference>
<dbReference type="RefSeq" id="NP_384499.1">
    <property type="nucleotide sequence ID" value="NC_003047.1"/>
</dbReference>
<dbReference type="RefSeq" id="WP_010968546.1">
    <property type="nucleotide sequence ID" value="NC_003047.1"/>
</dbReference>
<dbReference type="SMR" id="Q92SJ1"/>
<dbReference type="EnsemblBacteria" id="CAC41830">
    <property type="protein sequence ID" value="CAC41830"/>
    <property type="gene ID" value="SMc01127"/>
</dbReference>
<dbReference type="KEGG" id="sme:SMc01127"/>
<dbReference type="PATRIC" id="fig|266834.11.peg.1766"/>
<dbReference type="eggNOG" id="COG3176">
    <property type="taxonomic scope" value="Bacteria"/>
</dbReference>
<dbReference type="HOGENOM" id="CLU_058962_1_0_5"/>
<dbReference type="OrthoDB" id="9787072at2"/>
<dbReference type="BioCyc" id="MetaCyc:MONOMER-16663"/>
<dbReference type="Proteomes" id="UP000001976">
    <property type="component" value="Chromosome"/>
</dbReference>
<dbReference type="GO" id="GO:0043810">
    <property type="term" value="F:ornithine-acyl [acyl carrier protein] N-acyltransferase activity"/>
    <property type="evidence" value="ECO:0007669"/>
    <property type="project" value="UniProtKB-EC"/>
</dbReference>
<dbReference type="GO" id="GO:0006629">
    <property type="term" value="P:lipid metabolic process"/>
    <property type="evidence" value="ECO:0007669"/>
    <property type="project" value="UniProtKB-KW"/>
</dbReference>
<dbReference type="Gene3D" id="3.40.630.30">
    <property type="match status" value="1"/>
</dbReference>
<dbReference type="InterPro" id="IPR016181">
    <property type="entry name" value="Acyl_CoA_acyltransferase"/>
</dbReference>
<dbReference type="InterPro" id="IPR052351">
    <property type="entry name" value="Ornithine_N-alpha-AT"/>
</dbReference>
<dbReference type="PANTHER" id="PTHR37323">
    <property type="entry name" value="GCN5-RELATED N-ACETYLTRANSFERASE"/>
    <property type="match status" value="1"/>
</dbReference>
<dbReference type="PANTHER" id="PTHR37323:SF1">
    <property type="entry name" value="L-ORNITHINE N(ALPHA)-ACYLTRANSFERASE"/>
    <property type="match status" value="1"/>
</dbReference>
<dbReference type="Pfam" id="PF13444">
    <property type="entry name" value="Acetyltransf_5"/>
    <property type="match status" value="1"/>
</dbReference>
<dbReference type="SUPFAM" id="SSF55729">
    <property type="entry name" value="Acyl-CoA N-acyltransferases (Nat)"/>
    <property type="match status" value="1"/>
</dbReference>
<proteinExistence type="evidence at protein level"/>
<organism>
    <name type="scientific">Rhizobium meliloti (strain 1021)</name>
    <name type="common">Ensifer meliloti</name>
    <name type="synonym">Sinorhizobium meliloti</name>
    <dbReference type="NCBI Taxonomy" id="266834"/>
    <lineage>
        <taxon>Bacteria</taxon>
        <taxon>Pseudomonadati</taxon>
        <taxon>Pseudomonadota</taxon>
        <taxon>Alphaproteobacteria</taxon>
        <taxon>Hyphomicrobiales</taxon>
        <taxon>Rhizobiaceae</taxon>
        <taxon>Sinorhizobium/Ensifer group</taxon>
        <taxon>Sinorhizobium</taxon>
    </lineage>
</organism>
<keyword id="KW-0012">Acyltransferase</keyword>
<keyword id="KW-0444">Lipid biosynthesis</keyword>
<keyword id="KW-0443">Lipid metabolism</keyword>
<keyword id="KW-1185">Reference proteome</keyword>
<keyword id="KW-0808">Transferase</keyword>
<accession>Q92SJ1</accession>